<sequence length="9518" mass="1050864">MAIEAVEAQHRITGSQCQDPVELSLAAIRIWALQVLEWFNDNPASIKIGHAAPGGNTTFTMELNVQGDATDVVQITQDKEAQDLAWKCQEANLALVASMQVSGDPEASTLLVLYFMGDKGSRVKFDTTKTVHELEIHGWVHPAGIDMKIFPVVESARKLALQLAERLEARTPQPTVTGDMSDMPISEDDLGTIWGWNSQAAAPVERCVHDLISERARETPNAPAVCAWDGELDYEQLDKLSSRLAHYLLQLGVSPTHFVPLCFEKSVWMMVAILGVMKSGAVISTMDPTQPEDRLRTIVQQLRSAWVMCSPAQRDVATRLGASTVITLDHSLIQSLPPLGCSKLPSVDPASTLYVVFTSGSTGTPKGAIINHINFSSAITYQHEALGLSNTARVFDFASYAFDLAWGNIIHTFAAGACLCIPRESERRGDIAAAMRRLRVNHVQLTPSVARLIDPNDVPSLRLILLIGEPMSQADVDQWTPHCTLINSYGPAECTVAVTFQKISPDGSWDGSMGTGVACNTWVVDVSGESLVPPGGTGELWLEGPLVGQGYLGDSEKTIASYVETPLWLAQGAPDYPGRRGRLYKTGDLVRYNKEGRLVYVARKDDQVKVRGQRVELAEVEWHLKQALPDPTIPVVAEVITPSGGKSAILVAYLALGPEFKQDMDRVRNELHRYTNGVSETLAQQLPQYMVPSLYIPVPEIPMTGTGKTDRRRLRETSSSMTMQQLVEMQPSQGERCAPRTEMEWRLQQLWALSLGIDAESIAVGDSFLQIGGDSVAAIRLVQLARKEAVVLTVADVFNLPRLCDLAEVARLEQPKHVDIPPFSLLPKFDSAPSNACALAAAECGVPAESIADLLPCSPLQEGLLALTGKRPGDYIRCLTMELPSDVDLARFRHAWSKVVQTASVLRTRIVEVPTLGLLQVVLVEEPEWRESDEDLISFVQSEKESYMGLNTHLTRFGLVKDEYQKVSFIWTIHHALYDGWSMPLLLEQVESEYWHGDCETLAPFNSFVKYLTDSGEGAEEYWRSQLDGIEAPIFPSLPSPGYQPQAHNQLEHQVLNIDWPGNNITASTVVRAAWAILTSRYTHSSDVIFGATLTGRQAPVPYIERIAGPTIATVPIRVSVDGELGVATLLQNLQKQAVDMISYEQTGLKRIRHINSDADHATQFQTLLVVQPAARKTSRLLDERLFPEDPYDGENELASINTYALVVECHLEPNGMLLRMSFDSQVIEVHQADRMARQFEEVLRQISRENAAENLIKAVDAASPEDLAQIWRWNKKVPPVIEGCVHDLIAQRVQEQPDRPAVCAWNGQLTYEELGLHSTNLARFILSLGAGAGPGAVIPICFEKSMWTPVAMLAAIKTGGMSVTVDPSQPQERLQLIMQQTKPPLILTSPMYKSLAARLATQVIIVDAEALKGMAPSIPNNFTMPSINPASGLYIAFTSGSTGTPKGAIMTHENVRSAIDYQNEIMGTDLHSRLYDFTSYAFDVAWLNFFHAFTAGGCLCIPSDAQRKDDIPGSMDQLEANYMLLTPSTARTLDPKTLPGLKTLILVGEAVTGEDLRKWAPNVTLKNGYGPAECTGLSTIHTYEGSGDQPNTVGFAVGLRPWIVEPVHGTCLAPLGAIGELWVEGPLVGGGYLNDPDHTAESFVRDPPWLLRGGPSCPEKARQGRLYKTGDLVRYNPNGSLAYVGRKDTQVKIRGQRVELEEVESYLRQTIPGGTANTVIADMVTLRGSSSPTLVVYIALGEAATQAPESVRAELSRYTHGVVETLGELLPSYMVPNLYIPVKDIPISTTGKTDRKRLRQLGSSMRLEELLELQSRREKRLPQTELERRLRDLWADVLNIDVCHIGVDDGFFSLGGDSISAMQVSAKSRQLGFRITVNDIFKSKTIGRLAHCSQTEQALEVKASEQLDTTFALSPIQQLFFDSQPSTYGHFNQSFFLRISRSQNSDDVLHAVESVVTCHSMLRARFHQEPNGRWVQRVTPSTGKSYNYHQARVSSLDDAIPALNISQQSLDIQNGPVFAANLIDTGDMQYLFLVAHHLVIDLVSWRIILHDIEQMLTKSSVSSLPSCASLPFQTWCQLQASYASENLAPNIALPFDIDPPCIDYWGLDQAQNSYDNIVEQGFAISKSTTDLLLGAANLAFQTQPVELFQAALLHSFMQVFDDRTIPTIFTEGHGREPWDHALDLSRTVGWFTTIAPTAVTASTNLSIAEVVVRTKDGRRRTPGNGWPYFTSRYLNAAGKKSFGVSHCHEIVFNYFGLYQQLEKADALFQPCETLAGRVPDVAGHMHRFALVDVAAEVTHGCLRFDFQYNRHMQKQPAIREWITECQRSLEVVAKELILLQPRYTVSDFPLLPQTEATRRKVESLPDLGISFGEIEDIYPCSPVQQGIFLSQAKNPDLYQTRVRWCVQSVDPQSAVDAQRLARSWCQVVARHGALRTIFTQSVVSDGYSDQIVLKEVSPPIHILPPHHPKEGMAAVAGYQKSVGDRDRSLHSLLLCPTSEGSVYCQLDINHAIIDAISIGIIKQDLRAAYDGTLPSEPAPVYSNYIQHIQSSSSSEAREYWKRRVVGAEPCIFPVLNQNQAEPNARGIASLPVTQEIYDSLRSFCRIHGLTPSNVLHLAWGLVLRCYTSNESVCFAYLSSGRDVPVDRADGVVGPFINILVSHAKITSDRSLLSIMQANQAEYLEGLEYQHFPLAEVRHYLNADAESFFNTALSVQSGGLSQQQDPSGISFDEETWDDPNEYDMATSVFLREDDAQVSINYSHKLLSETQAASVAGSFLEALRVIINKPSASVDNLQIASSQDIDAIWNWNRQVPKRVSSSVTDLIVARIQQQPEAPAVCSWDGELTYRDLDRLSSRLAQQLLGLGIAPRSIIPLCFEKSMWVPVAMLAVMKAGCAVVGMDPEQPKERLQLIIAKTQPALILTSPRQRDLAQSLLGMVVTVTLDSLPAAHISDKYGFPPSDPTDTLFVAFTSGSTGTPKGAIISHENMCSAITHHADACGITTSSRVFDFASYAFDAAWFNFVYPLVVGGCMCIPSDEQRTNRVAECMEQMRVNYALFTSSMARTIDPTTVPSLETLVLGGEALGAEDMDIWKHINLKGAYGPAECTIIATFNDFKHRNEHPRTLGHTVGLTAWVVEPLRSKSLVPIGAIGELWLEGPLVGPGYLRDPEKTSASRAEDPAWLVHGTSRHPGRRGYLYKTGDLVQYREDGALVYINRKDNQVKIRGQRVELGDVEYHARRALSANATQDLVVEVIYPKGRNNPILVAFISLGEQASGSAESIREALALCTKGVEESLKQHLPSYMVPSMYVPVAEIPLTATAKTDRRRIQQIGSSLTLEQLAELQPSRRKARAPATASEQRLQKLWATVLERETSSISADDSFLRIGGDSIGAIRLAQLAADHGLMLTVATIFKSPTLCDMAQTLKVESVSEQVIQPLSLLKLQIDSDQALKQAAAQCDLEVSSIEDVLPCTPLQEGLLSLTVKRPGAYVIRQVLRLHDQIDVQRFRNACNYVATSTAILRTRVIDLHEQGLVQVVTKQIPEWQESTSLAAFLRLDEQNPVGLGTALARFALVHDRVDDRIYSVWTLHHALYDGWSMPLLLKEVEKAYFGVKTEGLGSFAGFVKHITELGAETDEYWKNEFDGLLAVQFPVLPSPHYQPQAQEVMHHEITNLQWLQDNTTPSTAIRAAWSVLVSHYTQSSDVIFGSTVTGRQASIPKVELVEGPTIATVPIRVEIQEKATVANLLEQIQKQSVDMIPFEQAGLQRIRRLSPETEQGCAFQTFLVVQPAPQPAKAEHDDWIFEEQSNDYTPGSINNFNSYALLLECQLTADGVSINISYDAHIVTQVQVETIAGQFEHVLRQVCKEASQYLEVKDIEAASEDDIRRIWDLNSPTPRAVETCMHDLILQQAHQRPNASAICGWDGELTYGQLDDLSTRLAHRLVEAGVQPGAIVALCLEKSMWMPVAMLGVVKAGATGVTMDITQPEERLRLIVDQVQPPLIVSSVEAKNLASRLTEKAVLVISEEALEHQLRPQMVTKKGLPPVQSTAGLYVAFTSGSTGVPKGALMTHGNVASAVYHQQAVLGYKPTDRVFDFSSYAFDAAWFNFLHTMAAGACLCIPSEDERRSDVTECMRRMRVTYAAITPSTARLINPASVPELRCLLLGGETVSKQDITQWCPFVNLINIYGPAECSAISTTFTYGDSDHPSGTIGAGRGMATWVVEPSRGRHLSPYGAVGELWLEGPLVGAGYVGRPDINATTFIHDPPWLLRGGAGISGRRGRLYRTGDLVRYNSDGTLLYVGRRDAQVKIRGQRVELTEVEHYLYESLPTGSRSTPFAVEVITPRETNNPILVAFFGMGQLEWGSTEVVREALRKHTQDVQAQMAELLPSFLVPGIFIPVAEIPVTATGKIDKRSLRQLGEQSSLDELVALQPTQGERQTPTTITECRILELWAKTLNVNPERISIHDDFFTLGGDSISAMQLSAKSRSTGLQITVPAIFKHRTIARLAACTTPVDQIMNQSTERTGVPFALSPIQQLFVNTQQGADNHFNQSFLVRITQSTSSDQLKRAIEAIVAHHSMLRARFKSTPENIWTQQILPSSAGSYIFSSHEVISFQDSSDIVTRSQTSLDIENGPLLAVDLLNTQKDGQYLFLVAHHMVIDLVSWRILLADLEEYLTTGTLSGFVPMSFQTWCELQADYARAHLFPKDVLPFSPEPPQYDYWGVAPSTNTFDNLAKGSVILSKEVTEILLGSANAAFNTQPVEILHAALLHSFTKAFHDRSPPSIFSEGHGREPWTSSIDLSRTVGWFSTIYPVVATVDPDEKISALARRIKDTRRCVPQNGWSYFTSRYLNPTGKKDFQINGPVEVIFNYLGLYQQLERQDSLFHVSEMPVDVHELSDIASKLCRFALIDISASVLQGRLRVDYLYNNRMRNQEGIRKWIQECQCSLEDAAQELPSLQPTYTICDFPLLHMSELGLEKLGSALADAGVSYGQVEDIYPCSPIQQGILMSQVKNPSLYQTTIKWLAESTDKGSSLDVSRLKKAWQLVVDRHPMLRTKFIDSLMPDGLKDQLVLKSLEAEVHVITSGQRDASDTAIPRENNAFLLIYTTPSGAVCELLINHALIDASSLVILKQELCAAYDGSLSNSMPGLYSEYILFLQSLSEQKAHEYWHHLLEGVNPCIFPSLGARNPRGPRSKSVISRKLDPNMHDLLRLFCMDHGLTTSNVFHIAWGLVLRAYTGLETVCFGYLTSGRDIPVSGAERTIGPFINMLTSRVSLESNESLLSLAQKNQGQYLSSLEFQHYPLAKIFHFLDLPGKELFNTALSVQANRLVSNNTASSISLTEMGGDDPTEYDIMMNIGLDENEIAINFTYNASMLSTSHAENVLNLFIQAVRQTITHSDQTPHQANLISKEDLRRILNWNAMAPAAVNASIGDMISEQAQNQPDAPAVCACDGDLTYKELDYLSTRLASHLHGLGVTPGSMVPLLFEKSMWMSVAALAVIKSGGAMVGLDIEQPQDRLRTILEQTQGSVIVTSPTMRSKGNSLGMDTVVIVDRASMDQLEPVRGTVLPSIDPASPLYIVFTSGTTGTPKGVVISHCNVASAITYQQDSLGLNSASRVLDFVSYAFDVAWGTILHTFVAGACLCVPEESERRGDIGAAMRRLQVNYAVLTPTIARLLDPQSIPLVQTMVLTGEPLDPIDVQKWALQTQLVNAYGPSETTIWATLERYPFSENEPSLGRGKGCVTWVVDPNREAQLCPIGCTGELWLEGPIVGLGYLNDTDKTAASFLPAPTWLTQGESSRRPGRLYKTGDLVRYNLDGTLIYAGRKDGQVKIRGQRVELGEVEYHIQQAMPTGTGVPVVAEVITPKASANSLLVAYLALGDRATGSTEGIRNALSYYTNIFTQCLPESLPGYMVPNIYIPVTEIPMTTTGKTDRRQLRTIGSDQTLAQLAELQPSRGKERVASSPVELALQRLFSEVLNIDLDIVGTDDSFFLLGGDSITAMQLSARSQSVDFYITVADIFKHKTVAQLAKNSGLQAAETSSIHIAETVDTPFELSPIQRMFFDFQDIRKNMFNQSFLVRVSRPHLPDQVKEGIEQLVVRHSMLRARFIQVDGAWTQKILADATCCYEFQRHDIPSLHEAKSLLNQSQQILDIEQGPIFVVYLINTNDEGQFLFMVAHHLVVDLVSWRILLGELEEYLVHGKVAGPAPLSFQAWCQLQADHAVNRSPAEDFPYDVPPLMYDYWKFTPGVSPNTIGDTTQCSIVIEKSLTDQLLGSANTVFNTQPVEILHAALLYSFAQSFPDRVSPAIFTEGHGREAWNSAIELGRTVGWFTTVYPVVVDAIKSDRLIDIVRRSKDYRRQIPANGRPYFASRYLNPAGRQAFHLDGPVEIIFNYFGLYQQLERKDALFQQSDVLISDLMEAAPELSRFALIDVAAYVAQGKLHVDFLYNRHLQHGSKIRDWIIECEHSLVMAAHQLPLLSPSYTACDFPLMPLGESSLHLLINEALPGLGLTFGQVEDIYPCTPIQEGILTSQAKNPALYWTRVRWLVSSTTGSLVDRNRLGRAWQQVVDRHPILRTIFIDSVRSGGVKDQVVIKNVKSDVQLLGTDKPADPLTGVQWHTDVASKRDSPQHALALSQSASGSVFCDLEINHAMVDAYSLGLLKYEISRAYMGQISSEAGPSYEAYVRHIQSLPASAEQFWAEYLNEVPACNFPVLAEPNPDHTNSRETLSLDMDIKTHLALRKFCQQYEMTPSSVFHLAWGLVIRAYTGLDTVCFGYLTSGRDIPIPGVDRAIGPFINMLVSRINLSKGSSALETLQEDQRDYLAALQYQHTPLAKILEISGRPGKGLFNTGISVQNNASAQEPEPQEVIFTDVGGLIPPSTSLLSTDGSQRIATLFLQAVEGVIHNPNQVPRDINLVSEQDIQQIWSWNAQVPQAVKTCVHDLIAKQACLRPNSSAIHAWDGDATYKELDHFSSRLAHHLVDLGIRANDAVPLCFEKSMWMPVAALGVIKAGGACVALDTTQPEERLRGILQDIQPSFVLSSRANEHLTRRITDTHVLFVERPLFPQLPVPSCSDLPVVTPSSPVYVVFTSGSTGKPKGTAISHTNFASAIVHQPDLLALNPDARVFDFVSYAFDVAWSNILHTFAAGACLCIPSESVRREGTAQAMDAMKVTHVQFTPSMARTIDPNQVTSLRTLILGGEALSKQDIRLWAPRVDLRVAYGPAECTVAAAMTNVTQESGQVGKIGHGVGLNTWVVGLSEDAGLVPVGAVGELWLEGPLVGLGYIGQPQKTAESFVQDPKWLMNGPRGRSGRVYRTGDLVRYNPDGTLVYVGRKDSQVKVRGQRVELEETEYHIHAALSDGIGAVADVISPQGSANAMLVAYLDVGVTVDASLETIHAAMRPYTTGLADSLAQCLPQFMIPTMYIPVAGIPMTLTGKTDRRRLRSIGSSLSLDRLADIQPTRGQRQLPRTEVEMQLQQLWAEVLNIDPQQIGAHDSFFSLGGDSISAMQLSAKSRSAGLRVTVPDIFKLATIAGLAPSAASQAQKVYDWECTEGEAFELSPIQQMFIQTSQCNHFNQSFFLRITRPVSSTDVRRALEAVVTEHAILRVRFDHIVDEQWTQRVIPYSPECYKYEQHTIESFSDVSPILDRSQKSLDIQAGPIFSADLIDTGTQGHYLFLVAHHLAIDLVSWRIILADMEEHLTTNKISGFKPLPFQAWCQLQSEYARDQLPPEAAFPVEIPPPQDYWGLDPTTNTMGNTIHSTFSLSKDDTDSLLGCANMAFDTQLVEILQAALLHSFVYTFQDRPAPTIFSEGHGREPWDSAIDLSRTVGWFTTMSPTLVSASALSNDSLQTVVRRTKDGRRQVPGHGWPYFTSRYLNEKGKKVFGGYGAPEITFNYLGFYQQLEREDSLFAPASPPEGTLSDVAEDMGRFALIEVMASVSAGCLEFSFMFNCNTRHRDQIGTWITRYEHSLQTAARELPHHPRSYTQCDFPLLSLSETALLKLNDKILPGLGLSYGQVEDIYPLTPIQQGILLSQAKSPHLYWTRIRWLVQSASPSSVNLDRLVEAWKRVVSRHSALRTVFVESPSPHRFEDQLVMRTCEPTIHLLSSSDPPAALARHWESRQEPKPLHSLVICSTPSGDNVLCDLEMNHAITDATSTALLKREICAAYDDLLDATPGPLYRDYIRHIQSVGTEASLEYWKDYLEGVPPCIFPSQREPQSGENKARASMTQLLDGDLHSRLRSFCQKNEFTPANLFHLAWALLLRCYTGSETVCFGYLLSGRDVPVEGVEKTVGPFINLLVSRLHLGGSEPLAAVIERNQAEFVSSLNHQHSSLVQILRSLDEPVDALFNTVLSVQGMDLKSHDKDDLFSLRLDEQDGHDPTEYDIMLNVGLGSEETAITFSYYGSLLSDQQARNLVQSLLQAIEEIIRTPSKTAAQVDLAGRHDQEIIWNWNCAVPPTVDTPVHELIAMQCQQRPDATAICAWDGEFTYQELDCLSTRLALHLGALGVGANSIVPLYFEKSRWMPVSVLAVMKAGGASVAMDANQPLERLRAIVQQVQPEVLLSSRENYPVAHRLGAQRVVPVHDAALSSVIVPADTVCPSIAASQRLYVTFTSGSTGTPKGVVISHSNFSSALVQQQESLSFGPNVRVFDFVSYAWDVSWSNLLRSLVAGGCLCIPHESQRRANIEKAMCDFRVNYATITPTVARLLNPAEVPYLNTLALIGEPLTQADLVQWTPHVGEIINTYGPSECPGCVTVNRIRRDCLQDPHLGSASACNTWIVDPTDADRLLPVGGIGELWLEGPLIGLGYLGLPERSAENFIENPSWLRRGGPGCSGRDGRLYRTGDLVRYNPDGSLVYISRKDAQVKIRGQRVELGEVEYHVRQGILDIDDASVVAGVMTPRGSSSPMLVCFLGLGDLASGSADQIRAVLGERTRGLDEYLGARLPRYMVPSTYIPVVDIPMTVTGKTDRRRLTQAGASRTLAELAELQPSRGECQPLTTEMEWRLQGLWAAVLGLDASLIAADDSFLRIGGDSITAIRLGQRASEEGFSLAVPDIFNNPRLCDMAHYLREGQSIYRDPQPFSLLSCPPGSLPSFLETSVLPFLEWNKDHITDVYPTTELQDLYVSSALAARMGEIEHIYMDLPAGVDLSRVHQSCLRLWQHLDILRTVFIVDGHRHIQVVLNDVEPDISAHEVHGDLTACAEKIYRSDLQSPQQLGRCFTRFFIIHNPDGQARLTIRFSHSQYDGFSLPLIFSCFATLYRGEALPSSPKFSGYIRHVQEQQQAARPYWRSLLLQSSITPVKPLSAANGDYPLSQHVGSLVESKTIAPAPAGRQGFTAATIFTSLCARMLSRITGATDVVFGQIVSGRASLPSSLQNVVGPCVNTIPVRVRIIPGQGLEQQLASVHEQHIQGLPYETSQFGDIAVNCTDWPDESRTPELVVQFQNLDNLEHDAGTSILGANSTLAAYQRKGRPVFPDFIFVLAKPKGDGWELSVSGSSKFHTQHTLDTVLDELTRQVVDC</sequence>
<comment type="function">
    <text evidence="3 6">Nonribosomal peptide synthetase; part of the gene cluster that mediates the biosynthesis of the unguisins, gamma-aminobutyric acid (GABA)-containing fungal cyclic heptapeptides with the amino acid sequence cyclo-(D-Ala1-D-Val2-L-Leu3-beta-MePhe4-D-Ala5-D-Trp6-GABA7) for unguisin H and cyclo-(D-Ala1-D-Ala2-L-Leu3-beta-MePhe4-D-Ala5-D-Trp6-GABA7) for unguisin I (PubMed:36715406). UngA' is the main enzyme within the cluster which condenses the 7 residues using its respective 7 modules (Probable). The terminal condensation domain (Ct) is involved in cyclization with D-alanine and thereby releasing of unguisins H and I (Probable). The alanine racemase ungC' provides D-alanine, which is then accepted by the first adenylation domain of ungA', whereas the methyltransferase ungE' provides the (2R,3R)-beta-methylphenylalanine residue incorporated by the module 4 (Probable). Finally, the hydrolase ungD' catalyzes the hydrolysis between the D-tryptophan and GABA residues of unguisins H and I to produce the corresponding linear peptides (Probable).</text>
</comment>
<comment type="pathway">
    <text evidence="6">Secondary metabolite biosynthesis.</text>
</comment>
<comment type="domain">
    <text evidence="6">NRP synthetases are composed of discrete domains (adenylation (A), thiolation (T) or peptidyl carrier protein (PCP) and condensation (C) domains) which when grouped together are referred to as a single module. Each module is responsible for the recognition (via the A domain) and incorporation of a single amino acid into the growing peptide product. Thus, an NRP synthetase is generally composed of one or more modules and can terminate in a thioesterase domain (TE) that releases the newly synthesized peptide from the enzyme. Notably, many fungal NRPSs utilize a terminal condensation (Ct) domain for macrocyclization and peptide chain release. Occasionally, methyltransferase domains (responsible for amino acid methylation) are present within the NRP synthetase. UngA has the following architecture: A-T-C-A-T-E-C-A-T-C-A-T-E-C-A-T-E-C-A-T-E-C-A-T-Ct.</text>
</comment>
<comment type="similarity">
    <text evidence="5">Belongs to the NRP synthetase family.</text>
</comment>
<dbReference type="EC" id="6.3.2.-" evidence="6"/>
<dbReference type="EMBL" id="MSFM01000006">
    <property type="protein sequence ID" value="PKY04129.1"/>
    <property type="molecule type" value="Genomic_DNA"/>
</dbReference>
<dbReference type="VEuPathDB" id="FungiDB:P168DRAFT_281777"/>
<dbReference type="OrthoDB" id="416786at2759"/>
<dbReference type="Proteomes" id="UP000234254">
    <property type="component" value="Unassembled WGS sequence"/>
</dbReference>
<dbReference type="GO" id="GO:0005737">
    <property type="term" value="C:cytoplasm"/>
    <property type="evidence" value="ECO:0007669"/>
    <property type="project" value="TreeGrafter"/>
</dbReference>
<dbReference type="GO" id="GO:0016853">
    <property type="term" value="F:isomerase activity"/>
    <property type="evidence" value="ECO:0007669"/>
    <property type="project" value="UniProtKB-KW"/>
</dbReference>
<dbReference type="GO" id="GO:0016874">
    <property type="term" value="F:ligase activity"/>
    <property type="evidence" value="ECO:0007669"/>
    <property type="project" value="UniProtKB-KW"/>
</dbReference>
<dbReference type="GO" id="GO:0031177">
    <property type="term" value="F:phosphopantetheine binding"/>
    <property type="evidence" value="ECO:0007669"/>
    <property type="project" value="InterPro"/>
</dbReference>
<dbReference type="GO" id="GO:0043041">
    <property type="term" value="P:amino acid activation for nonribosomal peptide biosynthetic process"/>
    <property type="evidence" value="ECO:0007669"/>
    <property type="project" value="TreeGrafter"/>
</dbReference>
<dbReference type="GO" id="GO:0044550">
    <property type="term" value="P:secondary metabolite biosynthetic process"/>
    <property type="evidence" value="ECO:0007669"/>
    <property type="project" value="TreeGrafter"/>
</dbReference>
<dbReference type="CDD" id="cd05918">
    <property type="entry name" value="A_NRPS_SidN3_like"/>
    <property type="match status" value="7"/>
</dbReference>
<dbReference type="CDD" id="cd19542">
    <property type="entry name" value="CT_NRPS-like"/>
    <property type="match status" value="5"/>
</dbReference>
<dbReference type="CDD" id="cd19534">
    <property type="entry name" value="E_NRPS"/>
    <property type="match status" value="4"/>
</dbReference>
<dbReference type="CDD" id="cd19545">
    <property type="entry name" value="FUM14_C_NRPS-like"/>
    <property type="match status" value="2"/>
</dbReference>
<dbReference type="FunFam" id="3.30.559.10:FF:000016">
    <property type="entry name" value="Nonribosomal peptide synthase Pes1"/>
    <property type="match status" value="4"/>
</dbReference>
<dbReference type="FunFam" id="3.30.559.30:FF:000002">
    <property type="entry name" value="Nonribosomal peptide synthase Pes1"/>
    <property type="match status" value="4"/>
</dbReference>
<dbReference type="FunFam" id="3.30.300.30:FF:000015">
    <property type="entry name" value="Nonribosomal peptide synthase SidD"/>
    <property type="match status" value="7"/>
</dbReference>
<dbReference type="FunFam" id="3.30.559.30:FF:000003">
    <property type="entry name" value="Nonribosomal peptide synthase SidD"/>
    <property type="match status" value="2"/>
</dbReference>
<dbReference type="FunFam" id="1.10.1200.10:FF:000005">
    <property type="entry name" value="Nonribosomal peptide synthetase 1"/>
    <property type="match status" value="4"/>
</dbReference>
<dbReference type="FunFam" id="3.40.50.12780:FF:000014">
    <property type="entry name" value="Nonribosomal peptide synthetase 1"/>
    <property type="match status" value="4"/>
</dbReference>
<dbReference type="Gene3D" id="3.30.300.30">
    <property type="match status" value="7"/>
</dbReference>
<dbReference type="Gene3D" id="1.10.1200.10">
    <property type="entry name" value="ACP-like"/>
    <property type="match status" value="7"/>
</dbReference>
<dbReference type="Gene3D" id="3.30.559.10">
    <property type="entry name" value="Chloramphenicol acetyltransferase-like domain"/>
    <property type="match status" value="11"/>
</dbReference>
<dbReference type="Gene3D" id="3.40.50.12780">
    <property type="entry name" value="N-terminal domain of ligase-like"/>
    <property type="match status" value="7"/>
</dbReference>
<dbReference type="Gene3D" id="3.30.559.30">
    <property type="entry name" value="Nonribosomal peptide synthetase, condensation domain"/>
    <property type="match status" value="11"/>
</dbReference>
<dbReference type="InterPro" id="IPR010071">
    <property type="entry name" value="AA_adenyl_dom"/>
</dbReference>
<dbReference type="InterPro" id="IPR036736">
    <property type="entry name" value="ACP-like_sf"/>
</dbReference>
<dbReference type="InterPro" id="IPR045851">
    <property type="entry name" value="AMP-bd_C_sf"/>
</dbReference>
<dbReference type="InterPro" id="IPR020845">
    <property type="entry name" value="AMP-binding_CS"/>
</dbReference>
<dbReference type="InterPro" id="IPR000873">
    <property type="entry name" value="AMP-dep_synth/lig_dom"/>
</dbReference>
<dbReference type="InterPro" id="IPR042099">
    <property type="entry name" value="ANL_N_sf"/>
</dbReference>
<dbReference type="InterPro" id="IPR023213">
    <property type="entry name" value="CAT-like_dom_sf"/>
</dbReference>
<dbReference type="InterPro" id="IPR001242">
    <property type="entry name" value="Condensatn"/>
</dbReference>
<dbReference type="InterPro" id="IPR020806">
    <property type="entry name" value="PKS_PP-bd"/>
</dbReference>
<dbReference type="InterPro" id="IPR009081">
    <property type="entry name" value="PP-bd_ACP"/>
</dbReference>
<dbReference type="InterPro" id="IPR006162">
    <property type="entry name" value="Ppantetheine_attach_site"/>
</dbReference>
<dbReference type="NCBIfam" id="TIGR01733">
    <property type="entry name" value="AA-adenyl-dom"/>
    <property type="match status" value="7"/>
</dbReference>
<dbReference type="NCBIfam" id="NF003417">
    <property type="entry name" value="PRK04813.1"/>
    <property type="match status" value="7"/>
</dbReference>
<dbReference type="PANTHER" id="PTHR45527">
    <property type="entry name" value="NONRIBOSOMAL PEPTIDE SYNTHETASE"/>
    <property type="match status" value="1"/>
</dbReference>
<dbReference type="PANTHER" id="PTHR45527:SF15">
    <property type="entry name" value="NONRIBOSOMAL PEPTIDE SYNTHETASE EASA-RELATED"/>
    <property type="match status" value="1"/>
</dbReference>
<dbReference type="Pfam" id="PF00501">
    <property type="entry name" value="AMP-binding"/>
    <property type="match status" value="7"/>
</dbReference>
<dbReference type="Pfam" id="PF00668">
    <property type="entry name" value="Condensation"/>
    <property type="match status" value="11"/>
</dbReference>
<dbReference type="Pfam" id="PF00550">
    <property type="entry name" value="PP-binding"/>
    <property type="match status" value="7"/>
</dbReference>
<dbReference type="SMART" id="SM00823">
    <property type="entry name" value="PKS_PP"/>
    <property type="match status" value="6"/>
</dbReference>
<dbReference type="SUPFAM" id="SSF56801">
    <property type="entry name" value="Acetyl-CoA synthetase-like"/>
    <property type="match status" value="7"/>
</dbReference>
<dbReference type="SUPFAM" id="SSF47336">
    <property type="entry name" value="ACP-like"/>
    <property type="match status" value="7"/>
</dbReference>
<dbReference type="SUPFAM" id="SSF52777">
    <property type="entry name" value="CoA-dependent acyltransferases"/>
    <property type="match status" value="22"/>
</dbReference>
<dbReference type="PROSITE" id="PS00455">
    <property type="entry name" value="AMP_BINDING"/>
    <property type="match status" value="7"/>
</dbReference>
<dbReference type="PROSITE" id="PS50075">
    <property type="entry name" value="CARRIER"/>
    <property type="match status" value="7"/>
</dbReference>
<dbReference type="PROSITE" id="PS00012">
    <property type="entry name" value="PHOSPHOPANTETHEINE"/>
    <property type="match status" value="3"/>
</dbReference>
<accession>A0A2I1D2N0</accession>
<protein>
    <recommendedName>
        <fullName evidence="4">Nonribosomal peptide synthetase ungA'</fullName>
        <shortName evidence="4">NRPS ungA'</shortName>
        <ecNumber evidence="6">6.3.2.-</ecNumber>
    </recommendedName>
    <alternativeName>
        <fullName evidence="4">Unguisins biosynthesis cluster protein A'</fullName>
    </alternativeName>
</protein>
<feature type="chain" id="PRO_0000458909" description="Nonribosomal peptide synthetase ungA'">
    <location>
        <begin position="1"/>
        <end position="9518"/>
    </location>
</feature>
<feature type="domain" description="Carrier 1" evidence="2">
    <location>
        <begin position="738"/>
        <end position="814"/>
    </location>
</feature>
<feature type="domain" description="Carrier 2" evidence="2">
    <location>
        <begin position="1822"/>
        <end position="1898"/>
    </location>
</feature>
<feature type="domain" description="Carrier 3" evidence="2">
    <location>
        <begin position="3352"/>
        <end position="3428"/>
    </location>
</feature>
<feature type="domain" description="Carrier 4" evidence="2">
    <location>
        <begin position="4436"/>
        <end position="4512"/>
    </location>
</feature>
<feature type="domain" description="Carrier 5" evidence="2">
    <location>
        <begin position="5957"/>
        <end position="6033"/>
    </location>
</feature>
<feature type="domain" description="Carrier 6" evidence="2">
    <location>
        <begin position="7464"/>
        <end position="7540"/>
    </location>
</feature>
<feature type="domain" description="Carrier 7" evidence="2">
    <location>
        <begin position="8995"/>
        <end position="9071"/>
    </location>
</feature>
<feature type="region of interest" description="Adenylation 1" evidence="1 6">
    <location>
        <begin position="214"/>
        <end position="611"/>
    </location>
</feature>
<feature type="region of interest" description="Condensation 1" evidence="1 6">
    <location>
        <begin position="853"/>
        <end position="1250"/>
    </location>
</feature>
<feature type="region of interest" description="Adenylation 2" evidence="1 6">
    <location>
        <begin position="1292"/>
        <end position="1695"/>
    </location>
</feature>
<feature type="region of interest" description="Epimerization 1" evidence="1 6">
    <location>
        <begin position="1911"/>
        <end position="2336"/>
    </location>
</feature>
<feature type="region of interest" description="Condensation 2" evidence="1 6">
    <location>
        <begin position="2376"/>
        <end position="2803"/>
    </location>
</feature>
<feature type="region of interest" description="Adenylation 3" evidence="1 6">
    <location>
        <begin position="2829"/>
        <end position="3224"/>
    </location>
</feature>
<feature type="region of interest" description="Condensation 3" evidence="1 6">
    <location>
        <begin position="3465"/>
        <end position="3869"/>
    </location>
</feature>
<feature type="region of interest" description="Adenylation 4" evidence="1 6">
    <location>
        <begin position="3906"/>
        <end position="4307"/>
    </location>
</feature>
<feature type="region of interest" description="Epimerization 2" evidence="1 6">
    <location>
        <begin position="4527"/>
        <end position="4954"/>
    </location>
</feature>
<feature type="region of interest" description="Condensation 4" evidence="1 6">
    <location>
        <begin position="4990"/>
        <end position="5411"/>
    </location>
</feature>
<feature type="region of interest" description="Adenylation 5" evidence="1 6">
    <location>
        <begin position="5433"/>
        <end position="5829"/>
    </location>
</feature>
<feature type="region of interest" description="Epimerization 3" evidence="1 6">
    <location>
        <begin position="6050"/>
        <end position="6470"/>
    </location>
</feature>
<feature type="region of interest" description="Condensation 5" evidence="1 6">
    <location>
        <begin position="6512"/>
        <end position="6856"/>
    </location>
</feature>
<feature type="region of interest" description="Adenylation 6" evidence="1 6">
    <location>
        <begin position="6947"/>
        <end position="7338"/>
    </location>
</feature>
<feature type="region of interest" description="Epimerization 4" evidence="1 6">
    <location>
        <begin position="7555"/>
        <end position="7978"/>
    </location>
</feature>
<feature type="region of interest" description="Condensation 6" evidence="1 6">
    <location>
        <begin position="8016"/>
        <end position="8444"/>
    </location>
</feature>
<feature type="region of interest" description="Adenylation 7" evidence="1 6">
    <location>
        <begin position="8468"/>
        <end position="8867"/>
    </location>
</feature>
<feature type="region of interest" description="Condensation 7" evidence="1 6">
    <location>
        <begin position="9111"/>
        <end position="9454"/>
    </location>
</feature>
<feature type="modified residue" description="O-(pantetheine 4'-phosphoryl)serine" evidence="2">
    <location>
        <position position="775"/>
    </location>
</feature>
<feature type="modified residue" description="O-(pantetheine 4'-phosphoryl)serine" evidence="2">
    <location>
        <position position="1859"/>
    </location>
</feature>
<feature type="modified residue" description="O-(pantetheine 4'-phosphoryl)serine" evidence="2">
    <location>
        <position position="3389"/>
    </location>
</feature>
<feature type="modified residue" description="O-(pantetheine 4'-phosphoryl)serine" evidence="2">
    <location>
        <position position="4473"/>
    </location>
</feature>
<feature type="modified residue" description="O-(pantetheine 4'-phosphoryl)serine" evidence="2">
    <location>
        <position position="5994"/>
    </location>
</feature>
<feature type="modified residue" description="O-(pantetheine 4'-phosphoryl)serine" evidence="2">
    <location>
        <position position="7501"/>
    </location>
</feature>
<feature type="modified residue" description="O-(pantetheine 4'-phosphoryl)serine" evidence="2">
    <location>
        <position position="9032"/>
    </location>
</feature>
<name>UNGA_ASPC2</name>
<organism>
    <name type="scientific">Aspergillus campestris (strain IBT 28561)</name>
    <dbReference type="NCBI Taxonomy" id="1392248"/>
    <lineage>
        <taxon>Eukaryota</taxon>
        <taxon>Fungi</taxon>
        <taxon>Dikarya</taxon>
        <taxon>Ascomycota</taxon>
        <taxon>Pezizomycotina</taxon>
        <taxon>Eurotiomycetes</taxon>
        <taxon>Eurotiomycetidae</taxon>
        <taxon>Eurotiales</taxon>
        <taxon>Aspergillaceae</taxon>
        <taxon>Aspergillus</taxon>
        <taxon>Aspergillus subgen. Circumdati</taxon>
    </lineage>
</organism>
<gene>
    <name evidence="4" type="primary">ungA'</name>
    <name type="ORF">P168DRAFT_281777</name>
</gene>
<reference key="1">
    <citation type="submission" date="2016-12" db="EMBL/GenBank/DDBJ databases">
        <title>The genomes of Aspergillus section Nigri reveals drivers in fungal speciation.</title>
        <authorList>
            <consortium name="DOE Joint Genome Institute"/>
            <person name="Vesth T.C."/>
            <person name="Nybo J."/>
            <person name="Theobald S."/>
            <person name="Brandl J."/>
            <person name="Frisvad J.C."/>
            <person name="Nielsen K.F."/>
            <person name="Lyhne E.K."/>
            <person name="Kogle M.E."/>
            <person name="Kuo A."/>
            <person name="Riley R."/>
            <person name="Clum A."/>
            <person name="Nolan M."/>
            <person name="Lipzen A."/>
            <person name="Salamov A."/>
            <person name="Henrissat B."/>
            <person name="Wiebenga A."/>
            <person name="De Vries R.P."/>
            <person name="Grigoriev I.V."/>
            <person name="Mortensen U.H."/>
            <person name="Andersen M.R."/>
            <person name="Baker S.E."/>
        </authorList>
    </citation>
    <scope>NUCLEOTIDE SEQUENCE [LARGE SCALE GENOMIC DNA]</scope>
    <source>
        <strain>IBT 28561</strain>
    </source>
</reference>
<reference key="2">
    <citation type="journal article" date="2023" name="J. Nat. Prod.">
        <title>Biosynthetic characterization, heterologous production, and genomics-guided discovery of GABA-containing fungal heptapeptides.</title>
        <authorList>
            <person name="Wei X."/>
            <person name="Chan T.K."/>
            <person name="Kong C.T.D."/>
            <person name="Matsuda Y."/>
        </authorList>
    </citation>
    <scope>FUNCTION</scope>
    <scope>PATHWAY</scope>
</reference>
<proteinExistence type="inferred from homology"/>
<evidence type="ECO:0000255" key="1"/>
<evidence type="ECO:0000255" key="2">
    <source>
        <dbReference type="PROSITE-ProRule" id="PRU00258"/>
    </source>
</evidence>
<evidence type="ECO:0000269" key="3">
    <source>
    </source>
</evidence>
<evidence type="ECO:0000303" key="4">
    <source>
    </source>
</evidence>
<evidence type="ECO:0000305" key="5"/>
<evidence type="ECO:0000305" key="6">
    <source>
    </source>
</evidence>
<keyword id="KW-0413">Isomerase</keyword>
<keyword id="KW-0436">Ligase</keyword>
<keyword id="KW-0596">Phosphopantetheine</keyword>
<keyword id="KW-0597">Phosphoprotein</keyword>
<keyword id="KW-0677">Repeat</keyword>